<keyword id="KW-1003">Cell membrane</keyword>
<keyword id="KW-0472">Membrane</keyword>
<keyword id="KW-1185">Reference proteome</keyword>
<keyword id="KW-0812">Transmembrane</keyword>
<keyword id="KW-1133">Transmembrane helix</keyword>
<accession>B7MA67</accession>
<gene>
    <name evidence="1" type="primary">yqhA</name>
    <name type="ordered locus">ECS88_3384</name>
</gene>
<feature type="chain" id="PRO_1000197571" description="UPF0114 protein YqhA">
    <location>
        <begin position="1"/>
        <end position="164"/>
    </location>
</feature>
<feature type="transmembrane region" description="Helical" evidence="1">
    <location>
        <begin position="15"/>
        <end position="35"/>
    </location>
</feature>
<feature type="transmembrane region" description="Helical" evidence="1">
    <location>
        <begin position="53"/>
        <end position="73"/>
    </location>
</feature>
<feature type="transmembrane region" description="Helical" evidence="1">
    <location>
        <begin position="136"/>
        <end position="156"/>
    </location>
</feature>
<comment type="subcellular location">
    <subcellularLocation>
        <location evidence="1">Cell membrane</location>
        <topology evidence="1">Multi-pass membrane protein</topology>
    </subcellularLocation>
</comment>
<comment type="similarity">
    <text evidence="1">Belongs to the UPF0114 family.</text>
</comment>
<reference key="1">
    <citation type="journal article" date="2009" name="PLoS Genet.">
        <title>Organised genome dynamics in the Escherichia coli species results in highly diverse adaptive paths.</title>
        <authorList>
            <person name="Touchon M."/>
            <person name="Hoede C."/>
            <person name="Tenaillon O."/>
            <person name="Barbe V."/>
            <person name="Baeriswyl S."/>
            <person name="Bidet P."/>
            <person name="Bingen E."/>
            <person name="Bonacorsi S."/>
            <person name="Bouchier C."/>
            <person name="Bouvet O."/>
            <person name="Calteau A."/>
            <person name="Chiapello H."/>
            <person name="Clermont O."/>
            <person name="Cruveiller S."/>
            <person name="Danchin A."/>
            <person name="Diard M."/>
            <person name="Dossat C."/>
            <person name="Karoui M.E."/>
            <person name="Frapy E."/>
            <person name="Garry L."/>
            <person name="Ghigo J.M."/>
            <person name="Gilles A.M."/>
            <person name="Johnson J."/>
            <person name="Le Bouguenec C."/>
            <person name="Lescat M."/>
            <person name="Mangenot S."/>
            <person name="Martinez-Jehanne V."/>
            <person name="Matic I."/>
            <person name="Nassif X."/>
            <person name="Oztas S."/>
            <person name="Petit M.A."/>
            <person name="Pichon C."/>
            <person name="Rouy Z."/>
            <person name="Ruf C.S."/>
            <person name="Schneider D."/>
            <person name="Tourret J."/>
            <person name="Vacherie B."/>
            <person name="Vallenet D."/>
            <person name="Medigue C."/>
            <person name="Rocha E.P.C."/>
            <person name="Denamur E."/>
        </authorList>
    </citation>
    <scope>NUCLEOTIDE SEQUENCE [LARGE SCALE GENOMIC DNA]</scope>
    <source>
        <strain>S88 / ExPEC</strain>
    </source>
</reference>
<evidence type="ECO:0000255" key="1">
    <source>
        <dbReference type="HAMAP-Rule" id="MF_00143"/>
    </source>
</evidence>
<name>YQHA_ECO45</name>
<organism>
    <name type="scientific">Escherichia coli O45:K1 (strain S88 / ExPEC)</name>
    <dbReference type="NCBI Taxonomy" id="585035"/>
    <lineage>
        <taxon>Bacteria</taxon>
        <taxon>Pseudomonadati</taxon>
        <taxon>Pseudomonadota</taxon>
        <taxon>Gammaproteobacteria</taxon>
        <taxon>Enterobacterales</taxon>
        <taxon>Enterobacteriaceae</taxon>
        <taxon>Escherichia</taxon>
    </lineage>
</organism>
<dbReference type="EMBL" id="CU928161">
    <property type="protein sequence ID" value="CAR04616.1"/>
    <property type="molecule type" value="Genomic_DNA"/>
</dbReference>
<dbReference type="RefSeq" id="WP_000439331.1">
    <property type="nucleotide sequence ID" value="NC_011742.1"/>
</dbReference>
<dbReference type="KEGG" id="ecz:ECS88_3384"/>
<dbReference type="HOGENOM" id="CLU_097887_1_1_6"/>
<dbReference type="Proteomes" id="UP000000747">
    <property type="component" value="Chromosome"/>
</dbReference>
<dbReference type="GO" id="GO:0005886">
    <property type="term" value="C:plasma membrane"/>
    <property type="evidence" value="ECO:0007669"/>
    <property type="project" value="UniProtKB-SubCell"/>
</dbReference>
<dbReference type="HAMAP" id="MF_00143">
    <property type="entry name" value="UPF0114"/>
    <property type="match status" value="1"/>
</dbReference>
<dbReference type="InterPro" id="IPR005134">
    <property type="entry name" value="UPF0114"/>
</dbReference>
<dbReference type="InterPro" id="IPR020761">
    <property type="entry name" value="UPF0114_bac"/>
</dbReference>
<dbReference type="NCBIfam" id="TIGR00645">
    <property type="entry name" value="HI0507"/>
    <property type="match status" value="1"/>
</dbReference>
<dbReference type="PANTHER" id="PTHR38596">
    <property type="entry name" value="UPF0114 PROTEIN YQHA"/>
    <property type="match status" value="1"/>
</dbReference>
<dbReference type="PANTHER" id="PTHR38596:SF1">
    <property type="entry name" value="UPF0114 PROTEIN YQHA"/>
    <property type="match status" value="1"/>
</dbReference>
<dbReference type="Pfam" id="PF03350">
    <property type="entry name" value="UPF0114"/>
    <property type="match status" value="1"/>
</dbReference>
<sequence>MERFLENAMYASRWLLAPVYFGLSLALVALALKFFQEIIHVLPNIFSMAESDLILVLLSLVDMTLVGGLLVMVMFSGYENFVSQLDISENKEKLNWLGKMDATSLKNKVAASIVAISSIHLLRVFMDAKNVPDNKLMWYVIIHLTFVLSAFVMGYLDRLTRHNH</sequence>
<proteinExistence type="inferred from homology"/>
<protein>
    <recommendedName>
        <fullName evidence="1">UPF0114 protein YqhA</fullName>
    </recommendedName>
</protein>